<comment type="function">
    <text evidence="1">Atypical chemokine receptor that controls chemokine levels and localization via high-affinity chemokine binding that is uncoupled from classic ligand-driven signal transduction cascades, resulting instead in chemokine sequestration, degradation, or transcytosis. Also known as interceptor (internalizing receptor) or chemokine-scavenging receptor or chemokine decoy receptor. Has a promiscuous chemokine-binding profile, interacting with inflammatory chemokines of both the CXC and the CC subfamilies but not with homeostatic chemokines. Acts as a receptor for chemokines including CCL2, CCL5, CCL7, CCL11, CCL13, CCL14, CCL17, CXCL5, CXCL6, IL8/CXCL8, CXCL11, GRO, RANTES, MCP-1 and TARC. May regulate chemokine bioavailability and, consequently, leukocyte recruitment through two distinct mechanisms: when expressed in endothelial cells, it sustains the abluminal to luminal transcytosis of tissue-derived chemokines and their subsequent presentation to circulating leukocytes; when expressed in erythrocytes, serves as blood reservoir of cognate chemokines but also as a chemokine sink, buffering potential surges in plasma chemokine levels (By similarity).</text>
</comment>
<comment type="function">
    <text evidence="3">(Microbial infection) Acts as a receptor for the malaria parasite Plasmodium yoelii in mature erythrocytes but not reticulocytes.</text>
</comment>
<comment type="subcellular location">
    <subcellularLocation>
        <location evidence="1">Early endosome</location>
    </subcellularLocation>
    <subcellularLocation>
        <location evidence="1">Recycling endosome</location>
    </subcellularLocation>
    <subcellularLocation>
        <location>Membrane</location>
        <topology>Multi-pass membrane protein</topology>
    </subcellularLocation>
    <text evidence="1">Predominantly localizes to endocytic vesicles, and upon stimulation by the ligand is internalized via caveolae. Once internalized, the ligand dissociates from the receptor, and is targeted to degradation while the receptor is recycled back to the cell membrane (By similarity).</text>
</comment>
<comment type="tissue specificity">
    <text>Expressed in liver and brain.</text>
</comment>
<comment type="disruption phenotype">
    <text evidence="3">(Microbial infection) Gene knockout results in reduced parasitemia after infection with Plasmodium yoelii parasites (PubMed:11929753). Increased resistance of mature erythrocytes to P.yoelii infection (PubMed:11929753). No significant effects on reticulocyte resistance to P.yoelii infection (PubMed:11929753).</text>
</comment>
<comment type="disruption phenotype">
    <text evidence="3">(Microbial infection) Gene knockout has no significant effects on parasitemia levels after infection with Plasmodium chabaudi parasites.</text>
</comment>
<comment type="similarity">
    <text evidence="5">Belongs to the G-protein coupled receptor 1 family. Atypical chemokine receptor subfamily.</text>
</comment>
<name>ACKR1_MOUSE</name>
<reference key="1">
    <citation type="journal article" date="1997" name="Genome Res.">
        <title>Cloning, characterization, and mapping of a murine promiscuous chemokine receptor gene: homolog of the human Duffy gene.</title>
        <authorList>
            <person name="Luo H."/>
            <person name="Chaudhuri A."/>
            <person name="Johnson K.R."/>
            <person name="Neote K."/>
            <person name="Zbrzezna V."/>
            <person name="He Y."/>
            <person name="Pogo A.O."/>
        </authorList>
    </citation>
    <scope>NUCLEOTIDE SEQUENCE [GENOMIC DNA / MRNA]</scope>
</reference>
<reference key="2">
    <citation type="submission" date="1998-11" db="EMBL/GenBank/DDBJ databases">
        <title>Murine skeletal muscle duffy antigen/receptor for chemokine glycoprotein (DARC).</title>
        <authorList>
            <person name="Tournamille C."/>
            <person name="Colin Y."/>
        </authorList>
    </citation>
    <scope>NUCLEOTIDE SEQUENCE [MRNA]</scope>
    <source>
        <tissue>Skeletal muscle</tissue>
    </source>
</reference>
<reference key="3">
    <citation type="journal article" date="1998" name="DNA Seq.">
        <title>Molecular cloning and characterization of a mouse gene with homology to the Duffy-antigen receptor for chemokines.</title>
        <authorList>
            <person name="Tang T."/>
            <person name="Owen J.D."/>
            <person name="Du J."/>
            <person name="Walker C.L."/>
            <person name="Richmond A."/>
        </authorList>
    </citation>
    <scope>NUCLEOTIDE SEQUENCE [GENOMIC DNA]</scope>
</reference>
<reference key="4">
    <citation type="submission" date="2000-02" db="EMBL/GenBank/DDBJ databases">
        <title>Conspicuous differences among gene genealogies of 21 nuclear genes of five Mus musculus subspecies.</title>
        <authorList>
            <person name="Liu Y."/>
            <person name="Kitano T."/>
            <person name="Koide T."/>
            <person name="Shiroishi T."/>
            <person name="Moriwaki K."/>
            <person name="Saitou N."/>
        </authorList>
    </citation>
    <scope>NUCLEOTIDE SEQUENCE</scope>
    <source>
        <strain>BFM/2Msf</strain>
        <strain>BLG2/Msf</strain>
        <strain>C57BL/10SnJ</strain>
        <strain>CAST/EiJ</strain>
        <strain>HMI/Msf</strain>
        <strain>MSM/Msf</strain>
        <strain>NJL/Msf</strain>
        <strain>Pgn2</strain>
        <strain>SWN/Msf</strain>
    </source>
</reference>
<reference key="5">
    <citation type="journal article" date="2004" name="Genome Res.">
        <title>The status, quality, and expansion of the NIH full-length cDNA project: the Mammalian Gene Collection (MGC).</title>
        <authorList>
            <consortium name="The MGC Project Team"/>
        </authorList>
    </citation>
    <scope>NUCLEOTIDE SEQUENCE [LARGE SCALE MRNA]</scope>
</reference>
<reference key="6">
    <citation type="journal article" date="2002" name="Blood">
        <title>Plasmodium yoelii uses the murine Duffy antigen receptor for chemokines as a receptor for normocyte invasion and an alternative receptor for reticulocyte invasion.</title>
        <authorList>
            <person name="Swardson-Olver C.J."/>
            <person name="Dawson T.C."/>
            <person name="Burnett R.C."/>
            <person name="Peiper S.C."/>
            <person name="Maeda N."/>
            <person name="Avery A.C."/>
        </authorList>
    </citation>
    <scope>FUNCTION (MICROBIAL INFECTION)</scope>
    <scope>DISRUPTION PHENOTYPE (MICROBIAL INFECTION)</scope>
</reference>
<dbReference type="EMBL" id="AF016697">
    <property type="protein sequence ID" value="AAC53360.1"/>
    <property type="molecule type" value="Genomic_DNA"/>
</dbReference>
<dbReference type="EMBL" id="AF016584">
    <property type="protein sequence ID" value="AAC53354.1"/>
    <property type="molecule type" value="mRNA"/>
</dbReference>
<dbReference type="EMBL" id="AF109159">
    <property type="protein sequence ID" value="AAF14225.1"/>
    <property type="molecule type" value="mRNA"/>
</dbReference>
<dbReference type="EMBL" id="U88431">
    <property type="protein sequence ID" value="AAF08328.1"/>
    <property type="molecule type" value="Genomic_DNA"/>
</dbReference>
<dbReference type="EMBL" id="AB039074">
    <property type="protein sequence ID" value="BAB68598.1"/>
    <property type="molecule type" value="Genomic_DNA"/>
</dbReference>
<dbReference type="EMBL" id="AB039075">
    <property type="protein sequence ID" value="BAB68599.1"/>
    <property type="molecule type" value="Genomic_DNA"/>
</dbReference>
<dbReference type="EMBL" id="AB039076">
    <property type="protein sequence ID" value="BAB68600.1"/>
    <property type="molecule type" value="Genomic_DNA"/>
</dbReference>
<dbReference type="EMBL" id="AB039077">
    <property type="protein sequence ID" value="BAB68601.1"/>
    <property type="molecule type" value="Genomic_DNA"/>
</dbReference>
<dbReference type="EMBL" id="AB039078">
    <property type="protein sequence ID" value="BAB68602.1"/>
    <property type="molecule type" value="Genomic_DNA"/>
</dbReference>
<dbReference type="EMBL" id="AB039079">
    <property type="protein sequence ID" value="BAB68603.1"/>
    <property type="molecule type" value="Genomic_DNA"/>
</dbReference>
<dbReference type="EMBL" id="AB039080">
    <property type="protein sequence ID" value="BAB68604.1"/>
    <property type="molecule type" value="Genomic_DNA"/>
</dbReference>
<dbReference type="EMBL" id="AB039081">
    <property type="protein sequence ID" value="BAB68605.1"/>
    <property type="molecule type" value="Genomic_DNA"/>
</dbReference>
<dbReference type="EMBL" id="AB039082">
    <property type="protein sequence ID" value="BAB68606.1"/>
    <property type="molecule type" value="Genomic_DNA"/>
</dbReference>
<dbReference type="EMBL" id="BC005583">
    <property type="protein sequence ID" value="AAH05583.1"/>
    <property type="molecule type" value="mRNA"/>
</dbReference>
<dbReference type="CCDS" id="CCDS35789.1"/>
<dbReference type="RefSeq" id="NP_034175.2">
    <property type="nucleotide sequence ID" value="NM_010045.2"/>
</dbReference>
<dbReference type="SMR" id="Q9QUI6"/>
<dbReference type="FunCoup" id="Q9QUI6">
    <property type="interactions" value="7"/>
</dbReference>
<dbReference type="STRING" id="10090.ENSMUSP00000045134"/>
<dbReference type="GlyCosmos" id="Q9QUI6">
    <property type="glycosylation" value="4 sites, No reported glycans"/>
</dbReference>
<dbReference type="GlyGen" id="Q9QUI6">
    <property type="glycosylation" value="4 sites"/>
</dbReference>
<dbReference type="iPTMnet" id="Q9QUI6"/>
<dbReference type="PhosphoSitePlus" id="Q9QUI6"/>
<dbReference type="PaxDb" id="10090-ENSMUSP00000045134"/>
<dbReference type="ProteomicsDB" id="285541"/>
<dbReference type="DNASU" id="13349"/>
<dbReference type="GeneID" id="13349"/>
<dbReference type="KEGG" id="mmu:13349"/>
<dbReference type="AGR" id="MGI:1097689"/>
<dbReference type="CTD" id="2532"/>
<dbReference type="MGI" id="MGI:1097689">
    <property type="gene designation" value="Ackr1"/>
</dbReference>
<dbReference type="eggNOG" id="ENOG502SNW7">
    <property type="taxonomic scope" value="Eukaryota"/>
</dbReference>
<dbReference type="InParanoid" id="Q9QUI6"/>
<dbReference type="OrthoDB" id="9396544at2759"/>
<dbReference type="PhylomeDB" id="Q9QUI6"/>
<dbReference type="TreeFam" id="TF105419"/>
<dbReference type="BioGRID-ORCS" id="13349">
    <property type="hits" value="3 hits in 77 CRISPR screens"/>
</dbReference>
<dbReference type="ChiTaRS" id="Ackr1">
    <property type="organism name" value="mouse"/>
</dbReference>
<dbReference type="PRO" id="PR:Q9QUI6"/>
<dbReference type="Proteomes" id="UP000000589">
    <property type="component" value="Unplaced"/>
</dbReference>
<dbReference type="RNAct" id="Q9QUI6">
    <property type="molecule type" value="protein"/>
</dbReference>
<dbReference type="GO" id="GO:0005769">
    <property type="term" value="C:early endosome"/>
    <property type="evidence" value="ECO:0007669"/>
    <property type="project" value="UniProtKB-SubCell"/>
</dbReference>
<dbReference type="GO" id="GO:0016020">
    <property type="term" value="C:membrane"/>
    <property type="evidence" value="ECO:0007669"/>
    <property type="project" value="UniProtKB-SubCell"/>
</dbReference>
<dbReference type="GO" id="GO:0055037">
    <property type="term" value="C:recycling endosome"/>
    <property type="evidence" value="ECO:0007669"/>
    <property type="project" value="UniProtKB-SubCell"/>
</dbReference>
<dbReference type="GO" id="GO:0019956">
    <property type="term" value="F:chemokine binding"/>
    <property type="evidence" value="ECO:0007669"/>
    <property type="project" value="InterPro"/>
</dbReference>
<dbReference type="GO" id="GO:0004930">
    <property type="term" value="F:G protein-coupled receptor activity"/>
    <property type="evidence" value="ECO:0007669"/>
    <property type="project" value="UniProtKB-KW"/>
</dbReference>
<dbReference type="GO" id="GO:0070098">
    <property type="term" value="P:chemokine-mediated signaling pathway"/>
    <property type="evidence" value="ECO:0007669"/>
    <property type="project" value="InterPro"/>
</dbReference>
<dbReference type="GO" id="GO:0006954">
    <property type="term" value="P:inflammatory response"/>
    <property type="evidence" value="ECO:0000315"/>
    <property type="project" value="MGI"/>
</dbReference>
<dbReference type="GO" id="GO:0032642">
    <property type="term" value="P:regulation of chemokine production"/>
    <property type="evidence" value="ECO:0000315"/>
    <property type="project" value="MGI"/>
</dbReference>
<dbReference type="CDD" id="cd15010">
    <property type="entry name" value="7tmA_ACKR1_DARC"/>
    <property type="match status" value="1"/>
</dbReference>
<dbReference type="FunFam" id="1.20.1070.10:FF:000266">
    <property type="entry name" value="Atypical chemokine receptor 1"/>
    <property type="match status" value="1"/>
</dbReference>
<dbReference type="Gene3D" id="1.20.1070.10">
    <property type="entry name" value="Rhodopsin 7-helix transmembrane proteins"/>
    <property type="match status" value="1"/>
</dbReference>
<dbReference type="InterPro" id="IPR005384">
    <property type="entry name" value="Duffy_chemokine_rcpt"/>
</dbReference>
<dbReference type="PANTHER" id="PTHR14181:SF1">
    <property type="entry name" value="ATYPICAL CHEMOKINE RECEPTOR 1"/>
    <property type="match status" value="1"/>
</dbReference>
<dbReference type="PANTHER" id="PTHR14181">
    <property type="entry name" value="DUFFY ANTIGEN/CHEMOKINE RECEPTOR"/>
    <property type="match status" value="1"/>
</dbReference>
<dbReference type="PRINTS" id="PR01559">
    <property type="entry name" value="DUFFYANTIGEN"/>
</dbReference>
<dbReference type="SUPFAM" id="SSF81321">
    <property type="entry name" value="Family A G protein-coupled receptor-like"/>
    <property type="match status" value="1"/>
</dbReference>
<organism>
    <name type="scientific">Mus musculus</name>
    <name type="common">Mouse</name>
    <dbReference type="NCBI Taxonomy" id="10090"/>
    <lineage>
        <taxon>Eukaryota</taxon>
        <taxon>Metazoa</taxon>
        <taxon>Chordata</taxon>
        <taxon>Craniata</taxon>
        <taxon>Vertebrata</taxon>
        <taxon>Euteleostomi</taxon>
        <taxon>Mammalia</taxon>
        <taxon>Eutheria</taxon>
        <taxon>Euarchontoglires</taxon>
        <taxon>Glires</taxon>
        <taxon>Rodentia</taxon>
        <taxon>Myomorpha</taxon>
        <taxon>Muroidea</taxon>
        <taxon>Muridae</taxon>
        <taxon>Murinae</taxon>
        <taxon>Mus</taxon>
        <taxon>Mus</taxon>
    </lineage>
</organism>
<keyword id="KW-1015">Disulfide bond</keyword>
<keyword id="KW-0967">Endosome</keyword>
<keyword id="KW-0297">G-protein coupled receptor</keyword>
<keyword id="KW-0325">Glycoprotein</keyword>
<keyword id="KW-0472">Membrane</keyword>
<keyword id="KW-0675">Receptor</keyword>
<keyword id="KW-1185">Reference proteome</keyword>
<keyword id="KW-0807">Transducer</keyword>
<keyword id="KW-0812">Transmembrane</keyword>
<keyword id="KW-1133">Transmembrane helix</keyword>
<evidence type="ECO:0000250" key="1"/>
<evidence type="ECO:0000255" key="2"/>
<evidence type="ECO:0000269" key="3">
    <source>
    </source>
</evidence>
<evidence type="ECO:0000303" key="4">
    <source>
    </source>
</evidence>
<evidence type="ECO:0000305" key="5"/>
<sequence length="334" mass="36694">MGNCLYPVETLSLDKNGTQFTFDSWNYSFEDNYSYELSSDYSLTPAAPCYSCNLLDRSSLPFFMLTSVLGMLASGSILFAILRPFFHWQICPSWPILAELAVGSALFSIAVPILAPGLHSAHSTALCNLGYWVWYTSAFAQALLIGCYACLNPRLNIGQLRGFTLGLSVGLWGAAALSGLPVALASDVYNGFCTFPSSRDMEALKYTHYAICFTIFTVLPLTLLAAKGLKIALSKGPGPWVSVLWIWFIFWWPHGMVLIFDALVRSKTVLLYTCQSQKILDAMLNVTEALSMLHCVATPLLLALFCHQTTRRSLSSLSLPTRQASQMDALAGKS</sequence>
<accession>Q9QUI6</accession>
<accession>O35970</accession>
<accession>Q91VB6</accession>
<accession>Q920X0</accession>
<accession>Q920X1</accession>
<accession>Q920X2</accession>
<accession>Q920X3</accession>
<proteinExistence type="evidence at transcript level"/>
<gene>
    <name type="primary">Ackr1</name>
    <name evidence="4" type="synonym">Darc</name>
    <name type="synonym">Dfy</name>
    <name type="synonym">Fy</name>
</gene>
<feature type="chain" id="PRO_0000152587" description="Atypical chemokine receptor 1">
    <location>
        <begin position="1"/>
        <end position="334"/>
    </location>
</feature>
<feature type="topological domain" description="Extracellular" evidence="2">
    <location>
        <begin position="1"/>
        <end position="61"/>
    </location>
</feature>
<feature type="transmembrane region" description="Helical; Name=1" evidence="2">
    <location>
        <begin position="62"/>
        <end position="82"/>
    </location>
</feature>
<feature type="topological domain" description="Cytoplasmic" evidence="2">
    <location>
        <begin position="83"/>
        <end position="93"/>
    </location>
</feature>
<feature type="transmembrane region" description="Helical; Name=2" evidence="2">
    <location>
        <begin position="94"/>
        <end position="114"/>
    </location>
</feature>
<feature type="topological domain" description="Extracellular" evidence="2">
    <location>
        <begin position="115"/>
        <end position="127"/>
    </location>
</feature>
<feature type="transmembrane region" description="Helical; Name=3" evidence="2">
    <location>
        <begin position="128"/>
        <end position="151"/>
    </location>
</feature>
<feature type="topological domain" description="Cytoplasmic" evidence="2">
    <location>
        <begin position="152"/>
        <end position="164"/>
    </location>
</feature>
<feature type="transmembrane region" description="Helical; Name=4" evidence="2">
    <location>
        <begin position="165"/>
        <end position="185"/>
    </location>
</feature>
<feature type="topological domain" description="Extracellular" evidence="2">
    <location>
        <begin position="186"/>
        <end position="205"/>
    </location>
</feature>
<feature type="transmembrane region" description="Helical; Name=5" evidence="2">
    <location>
        <begin position="206"/>
        <end position="226"/>
    </location>
</feature>
<feature type="topological domain" description="Cytoplasmic" evidence="2">
    <location>
        <begin position="227"/>
        <end position="242"/>
    </location>
</feature>
<feature type="transmembrane region" description="Helical; Name=6" evidence="2">
    <location>
        <begin position="243"/>
        <end position="263"/>
    </location>
</feature>
<feature type="topological domain" description="Extracellular" evidence="2">
    <location>
        <begin position="264"/>
        <end position="285"/>
    </location>
</feature>
<feature type="transmembrane region" description="Helical; Name=7" evidence="2">
    <location>
        <begin position="286"/>
        <end position="306"/>
    </location>
</feature>
<feature type="topological domain" description="Cytoplasmic" evidence="2">
    <location>
        <begin position="307"/>
        <end position="334"/>
    </location>
</feature>
<feature type="glycosylation site" description="N-linked (GlcNAc...) asparagine" evidence="2">
    <location>
        <position position="16"/>
    </location>
</feature>
<feature type="glycosylation site" description="N-linked (GlcNAc...) asparagine" evidence="2">
    <location>
        <position position="26"/>
    </location>
</feature>
<feature type="glycosylation site" description="N-linked (GlcNAc...) asparagine" evidence="2">
    <location>
        <position position="32"/>
    </location>
</feature>
<feature type="glycosylation site" description="N-linked (GlcNAc...) asparagine" evidence="2">
    <location>
        <position position="285"/>
    </location>
</feature>
<feature type="disulfide bond" evidence="1">
    <location>
        <begin position="49"/>
        <end position="274"/>
    </location>
</feature>
<feature type="disulfide bond" evidence="1">
    <location>
        <begin position="127"/>
        <end position="193"/>
    </location>
</feature>
<feature type="sequence variant" description="In strain: BLG2/Msf, C57BL/10SnJ, HMI/Msf, MSM/Msf, NJL/Msf and SWN/Msf.">
    <original>T</original>
    <variation>N</variation>
    <location>
        <position position="10"/>
    </location>
</feature>
<feature type="sequence variant" description="In strain: BLG2/Msf, C57BL/10SnJ, HMI/Msf, MSM/Msf, NJL/Msf and SWN/Msf.">
    <original>D</original>
    <variation>G</variation>
    <location>
        <position position="56"/>
    </location>
</feature>
<feature type="sequence variant" description="In strain: BLG2/Msf.">
    <original>P</original>
    <variation>L</variation>
    <location>
        <position position="61"/>
    </location>
</feature>
<feature type="sequence variant" description="In strain: BLG2/Msf, C57BL/10SnJ, CAST/Ei, HMI/Msf, MSM/Msf, NJL/Msf and SWN/Msf.">
    <original>S</original>
    <variation>G</variation>
    <location>
        <position position="76"/>
    </location>
</feature>
<feature type="sequence variant" description="In strain: BLG2/Msf, C57BL/10SnJ, CAST/Ei, HMI/Msf, MSM/Msf, NJL/Msf, pgn2 and SWN/Msf.">
    <original>S</original>
    <variation>L</variation>
    <location>
        <position position="178"/>
    </location>
</feature>
<feature type="sequence variant" description="In strain: BLG2/Msf, C57BL/10SnJ, CAST/Ei, HMI/Msf, MSM/Msf, NJL/Msf and SWN/Msf.">
    <original>V</original>
    <variation>A</variation>
    <location>
        <position position="188"/>
    </location>
</feature>
<feature type="sequence variant" description="In strain: BLG2/Msf, C57BL/10SnJ, HMI/Msf, MSM/Msf, NJL/Msf and SWN/Msf.">
    <original>T</original>
    <variation>A</variation>
    <location>
        <position position="194"/>
    </location>
</feature>
<feature type="sequence variant" description="In strain: C57BL/10SnJ, HMI/Msf, MSM/Msf and SWN/Msf.">
    <original>T</original>
    <variation>M</variation>
    <location>
        <position position="207"/>
    </location>
</feature>
<feature type="sequence variant" description="In strain: BLG2/Msf, C57BL/10SnJ, HMI/Msf, MSM/Msf, NJL/Msf and SWN/Msf.">
    <original>L</original>
    <variation>P</variation>
    <location>
        <position position="221"/>
    </location>
</feature>
<feature type="sequence variant" description="In strain: NJL/Msf.">
    <original>M</original>
    <variation>I</variation>
    <location>
        <position position="256"/>
    </location>
</feature>
<feature type="sequence variant" description="In strain: BLG2/Msf, C57BL/10SnJ, HMI/Msf, MSM/Msf, NJL/Msf and SWN/Msf.">
    <original>T</original>
    <variation>I</variation>
    <location>
        <position position="268"/>
    </location>
</feature>
<protein>
    <recommendedName>
        <fullName>Atypical chemokine receptor 1</fullName>
    </recommendedName>
    <alternativeName>
        <fullName>Duffy antigen/chemokine receptor</fullName>
    </alternativeName>
    <cdAntigenName>CD234</cdAntigenName>
</protein>